<reference key="1">
    <citation type="journal article" date="2001" name="Nature">
        <title>Complete genome sequence of a multiple drug resistant Salmonella enterica serovar Typhi CT18.</title>
        <authorList>
            <person name="Parkhill J."/>
            <person name="Dougan G."/>
            <person name="James K.D."/>
            <person name="Thomson N.R."/>
            <person name="Pickard D."/>
            <person name="Wain J."/>
            <person name="Churcher C.M."/>
            <person name="Mungall K.L."/>
            <person name="Bentley S.D."/>
            <person name="Holden M.T.G."/>
            <person name="Sebaihia M."/>
            <person name="Baker S."/>
            <person name="Basham D."/>
            <person name="Brooks K."/>
            <person name="Chillingworth T."/>
            <person name="Connerton P."/>
            <person name="Cronin A."/>
            <person name="Davis P."/>
            <person name="Davies R.M."/>
            <person name="Dowd L."/>
            <person name="White N."/>
            <person name="Farrar J."/>
            <person name="Feltwell T."/>
            <person name="Hamlin N."/>
            <person name="Haque A."/>
            <person name="Hien T.T."/>
            <person name="Holroyd S."/>
            <person name="Jagels K."/>
            <person name="Krogh A."/>
            <person name="Larsen T.S."/>
            <person name="Leather S."/>
            <person name="Moule S."/>
            <person name="O'Gaora P."/>
            <person name="Parry C."/>
            <person name="Quail M.A."/>
            <person name="Rutherford K.M."/>
            <person name="Simmonds M."/>
            <person name="Skelton J."/>
            <person name="Stevens K."/>
            <person name="Whitehead S."/>
            <person name="Barrell B.G."/>
        </authorList>
    </citation>
    <scope>NUCLEOTIDE SEQUENCE [LARGE SCALE GENOMIC DNA]</scope>
    <source>
        <strain>CT18</strain>
    </source>
</reference>
<reference key="2">
    <citation type="journal article" date="2003" name="J. Bacteriol.">
        <title>Comparative genomics of Salmonella enterica serovar Typhi strains Ty2 and CT18.</title>
        <authorList>
            <person name="Deng W."/>
            <person name="Liou S.-R."/>
            <person name="Plunkett G. III"/>
            <person name="Mayhew G.F."/>
            <person name="Rose D.J."/>
            <person name="Burland V."/>
            <person name="Kodoyianni V."/>
            <person name="Schwartz D.C."/>
            <person name="Blattner F.R."/>
        </authorList>
    </citation>
    <scope>NUCLEOTIDE SEQUENCE [LARGE SCALE GENOMIC DNA]</scope>
    <source>
        <strain>ATCC 700931 / Ty2</strain>
    </source>
</reference>
<feature type="chain" id="PRO_0000142048" description="1-(5-phosphoribosyl)-5-[(5-phosphoribosylamino)methylideneamino] imidazole-4-carboxamide isomerase">
    <location>
        <begin position="1"/>
        <end position="245"/>
    </location>
</feature>
<feature type="active site" description="Proton acceptor" evidence="1">
    <location>
        <position position="7"/>
    </location>
</feature>
<feature type="active site" description="Proton donor" evidence="1">
    <location>
        <position position="129"/>
    </location>
</feature>
<name>HIS4_SALTI</name>
<protein>
    <recommendedName>
        <fullName>1-(5-phosphoribosyl)-5-[(5-phosphoribosylamino)methylideneamino] imidazole-4-carboxamide isomerase</fullName>
        <ecNumber>5.3.1.16</ecNumber>
    </recommendedName>
    <alternativeName>
        <fullName>Phosphoribosylformimino-5-aminoimidazole carboxamide ribotide isomerase</fullName>
    </alternativeName>
</protein>
<proteinExistence type="inferred from homology"/>
<accession>Q8Z5J7</accession>
<gene>
    <name type="primary">hisA</name>
    <name type="ordered locus">STY2285</name>
    <name type="ordered locus">t0797</name>
</gene>
<keyword id="KW-0028">Amino-acid biosynthesis</keyword>
<keyword id="KW-0963">Cytoplasm</keyword>
<keyword id="KW-0368">Histidine biosynthesis</keyword>
<keyword id="KW-0413">Isomerase</keyword>
<organism>
    <name type="scientific">Salmonella typhi</name>
    <dbReference type="NCBI Taxonomy" id="90370"/>
    <lineage>
        <taxon>Bacteria</taxon>
        <taxon>Pseudomonadati</taxon>
        <taxon>Pseudomonadota</taxon>
        <taxon>Gammaproteobacteria</taxon>
        <taxon>Enterobacterales</taxon>
        <taxon>Enterobacteriaceae</taxon>
        <taxon>Salmonella</taxon>
    </lineage>
</organism>
<sequence length="245" mass="26116">MIIPALDLIDGTVVRLHQGDYARQRDYGNDPLPRLQDYAAQGAGVLHLVDLTGAKDPAKRQIPLIKTLVAGVNVPVQVGGGVRTEEDVAALLKAGVARVVIGSTAVKSPDVVKGWFERFGAQALVLALDVRIDEHGNKQVAVSGWQENSGVSLEQLVETYLPVGLKHVLCTDISRDGTLAGSNVSLYEEICARYPQIAFQSSGGIGDIDDIAALRGTGVRGVIVGRALLEGKFTVKEAIQCWQNV</sequence>
<comment type="catalytic activity">
    <reaction>
        <text>1-(5-phospho-beta-D-ribosyl)-5-[(5-phospho-beta-D-ribosylamino)methylideneamino]imidazole-4-carboxamide = 5-[(5-phospho-1-deoxy-D-ribulos-1-ylimino)methylamino]-1-(5-phospho-beta-D-ribosyl)imidazole-4-carboxamide</text>
        <dbReference type="Rhea" id="RHEA:15469"/>
        <dbReference type="ChEBI" id="CHEBI:58435"/>
        <dbReference type="ChEBI" id="CHEBI:58525"/>
        <dbReference type="EC" id="5.3.1.16"/>
    </reaction>
</comment>
<comment type="pathway">
    <text>Amino-acid biosynthesis; L-histidine biosynthesis; L-histidine from 5-phospho-alpha-D-ribose 1-diphosphate: step 4/9.</text>
</comment>
<comment type="subcellular location">
    <subcellularLocation>
        <location evidence="1">Cytoplasm</location>
    </subcellularLocation>
</comment>
<comment type="similarity">
    <text evidence="2">Belongs to the HisA/HisF family.</text>
</comment>
<evidence type="ECO:0000250" key="1"/>
<evidence type="ECO:0000305" key="2"/>
<dbReference type="EC" id="5.3.1.16"/>
<dbReference type="EMBL" id="AL513382">
    <property type="protein sequence ID" value="CAD02438.1"/>
    <property type="molecule type" value="Genomic_DNA"/>
</dbReference>
<dbReference type="EMBL" id="AE014613">
    <property type="protein sequence ID" value="AAO68488.1"/>
    <property type="molecule type" value="Genomic_DNA"/>
</dbReference>
<dbReference type="RefSeq" id="NP_456624.1">
    <property type="nucleotide sequence ID" value="NC_003198.1"/>
</dbReference>
<dbReference type="RefSeq" id="WP_000586403.1">
    <property type="nucleotide sequence ID" value="NZ_WSUR01000002.1"/>
</dbReference>
<dbReference type="SMR" id="Q8Z5J7"/>
<dbReference type="STRING" id="220341.gene:17586193"/>
<dbReference type="KEGG" id="stt:t0797"/>
<dbReference type="KEGG" id="sty:STY2285"/>
<dbReference type="PATRIC" id="fig|220341.7.peg.2305"/>
<dbReference type="eggNOG" id="COG0106">
    <property type="taxonomic scope" value="Bacteria"/>
</dbReference>
<dbReference type="HOGENOM" id="CLU_048577_1_2_6"/>
<dbReference type="OMA" id="EWLHLVD"/>
<dbReference type="OrthoDB" id="9807749at2"/>
<dbReference type="UniPathway" id="UPA00031">
    <property type="reaction ID" value="UER00009"/>
</dbReference>
<dbReference type="Proteomes" id="UP000000541">
    <property type="component" value="Chromosome"/>
</dbReference>
<dbReference type="Proteomes" id="UP000002670">
    <property type="component" value="Chromosome"/>
</dbReference>
<dbReference type="GO" id="GO:0005737">
    <property type="term" value="C:cytoplasm"/>
    <property type="evidence" value="ECO:0007669"/>
    <property type="project" value="UniProtKB-SubCell"/>
</dbReference>
<dbReference type="GO" id="GO:0003949">
    <property type="term" value="F:1-(5-phosphoribosyl)-5-[(5-phosphoribosylamino)methylideneamino]imidazole-4-carboxamide isomerase activity"/>
    <property type="evidence" value="ECO:0007669"/>
    <property type="project" value="UniProtKB-UniRule"/>
</dbReference>
<dbReference type="GO" id="GO:0000105">
    <property type="term" value="P:L-histidine biosynthetic process"/>
    <property type="evidence" value="ECO:0007669"/>
    <property type="project" value="UniProtKB-UniRule"/>
</dbReference>
<dbReference type="GO" id="GO:0000162">
    <property type="term" value="P:L-tryptophan biosynthetic process"/>
    <property type="evidence" value="ECO:0007669"/>
    <property type="project" value="TreeGrafter"/>
</dbReference>
<dbReference type="CDD" id="cd04732">
    <property type="entry name" value="HisA"/>
    <property type="match status" value="1"/>
</dbReference>
<dbReference type="FunFam" id="3.20.20.70:FF:000009">
    <property type="entry name" value="1-(5-phosphoribosyl)-5-[(5-phosphoribosylamino)methylideneamino] imidazole-4-carboxamide isomerase"/>
    <property type="match status" value="1"/>
</dbReference>
<dbReference type="Gene3D" id="3.20.20.70">
    <property type="entry name" value="Aldolase class I"/>
    <property type="match status" value="1"/>
</dbReference>
<dbReference type="HAMAP" id="MF_01014">
    <property type="entry name" value="HisA"/>
    <property type="match status" value="1"/>
</dbReference>
<dbReference type="InterPro" id="IPR013785">
    <property type="entry name" value="Aldolase_TIM"/>
</dbReference>
<dbReference type="InterPro" id="IPR006062">
    <property type="entry name" value="His_biosynth"/>
</dbReference>
<dbReference type="InterPro" id="IPR006063">
    <property type="entry name" value="HisA_bact_arch"/>
</dbReference>
<dbReference type="InterPro" id="IPR044524">
    <property type="entry name" value="Isoase_HisA-like"/>
</dbReference>
<dbReference type="InterPro" id="IPR023016">
    <property type="entry name" value="Isoase_HisA-like_bact"/>
</dbReference>
<dbReference type="InterPro" id="IPR011060">
    <property type="entry name" value="RibuloseP-bd_barrel"/>
</dbReference>
<dbReference type="NCBIfam" id="TIGR00007">
    <property type="entry name" value="1-(5-phosphoribosyl)-5-[(5-phosphoribosylamino)methylideneamino]imidazole-4-carboxamide isomerase"/>
    <property type="match status" value="1"/>
</dbReference>
<dbReference type="PANTHER" id="PTHR43090">
    <property type="entry name" value="1-(5-PHOSPHORIBOSYL)-5-[(5-PHOSPHORIBOSYLAMINO)METHYLIDENEAMINO] IMIDAZOLE-4-CARBOXAMIDE ISOMERASE"/>
    <property type="match status" value="1"/>
</dbReference>
<dbReference type="PANTHER" id="PTHR43090:SF2">
    <property type="entry name" value="1-(5-PHOSPHORIBOSYL)-5-[(5-PHOSPHORIBOSYLAMINO)METHYLIDENEAMINO] IMIDAZOLE-4-CARBOXAMIDE ISOMERASE"/>
    <property type="match status" value="1"/>
</dbReference>
<dbReference type="Pfam" id="PF00977">
    <property type="entry name" value="His_biosynth"/>
    <property type="match status" value="1"/>
</dbReference>
<dbReference type="SUPFAM" id="SSF51366">
    <property type="entry name" value="Ribulose-phoshate binding barrel"/>
    <property type="match status" value="1"/>
</dbReference>